<accession>P36944</accession>
<accession>P96734</accession>
<name>RBSR_BACSU</name>
<protein>
    <recommendedName>
        <fullName>Ribose operon repressor</fullName>
    </recommendedName>
</protein>
<evidence type="ECO:0000255" key="1">
    <source>
        <dbReference type="PROSITE-ProRule" id="PRU00111"/>
    </source>
</evidence>
<evidence type="ECO:0000305" key="2"/>
<keyword id="KW-0238">DNA-binding</keyword>
<keyword id="KW-1185">Reference proteome</keyword>
<keyword id="KW-0678">Repressor</keyword>
<keyword id="KW-0804">Transcription</keyword>
<keyword id="KW-0805">Transcription regulation</keyword>
<gene>
    <name type="primary">rbsR</name>
    <name type="ordered locus">BSU35910</name>
</gene>
<organism>
    <name type="scientific">Bacillus subtilis (strain 168)</name>
    <dbReference type="NCBI Taxonomy" id="224308"/>
    <lineage>
        <taxon>Bacteria</taxon>
        <taxon>Bacillati</taxon>
        <taxon>Bacillota</taxon>
        <taxon>Bacilli</taxon>
        <taxon>Bacillales</taxon>
        <taxon>Bacillaceae</taxon>
        <taxon>Bacillus</taxon>
    </lineage>
</organism>
<reference key="1">
    <citation type="journal article" date="1994" name="Microbiology">
        <title>Analysis of a ribose transport operon from Bacillus subtilis.</title>
        <authorList>
            <person name="Woodson K."/>
            <person name="Devine K.M."/>
        </authorList>
    </citation>
    <scope>NUCLEOTIDE SEQUENCE [GENOMIC DNA]</scope>
    <source>
        <strain>168</strain>
    </source>
</reference>
<reference key="2">
    <citation type="journal article" date="1997" name="Microbiology">
        <title>The Bacillus subtilis genome from gerBC (311 degrees) to licR (334 degrees).</title>
        <authorList>
            <person name="Presecan E."/>
            <person name="Moszer I."/>
            <person name="Boursier L."/>
            <person name="Cruz Ramos H."/>
            <person name="De La Fuente V."/>
            <person name="Hullo M.-F."/>
            <person name="Lelong C."/>
            <person name="Schleich S."/>
            <person name="Sekowska A."/>
            <person name="Song B.H."/>
            <person name="Villani G."/>
            <person name="Kunst F."/>
            <person name="Danchin A."/>
            <person name="Glaser P."/>
        </authorList>
    </citation>
    <scope>NUCLEOTIDE SEQUENCE [GENOMIC DNA]</scope>
    <source>
        <strain>168</strain>
    </source>
</reference>
<reference key="3">
    <citation type="journal article" date="1997" name="Nature">
        <title>The complete genome sequence of the Gram-positive bacterium Bacillus subtilis.</title>
        <authorList>
            <person name="Kunst F."/>
            <person name="Ogasawara N."/>
            <person name="Moszer I."/>
            <person name="Albertini A.M."/>
            <person name="Alloni G."/>
            <person name="Azevedo V."/>
            <person name="Bertero M.G."/>
            <person name="Bessieres P."/>
            <person name="Bolotin A."/>
            <person name="Borchert S."/>
            <person name="Borriss R."/>
            <person name="Boursier L."/>
            <person name="Brans A."/>
            <person name="Braun M."/>
            <person name="Brignell S.C."/>
            <person name="Bron S."/>
            <person name="Brouillet S."/>
            <person name="Bruschi C.V."/>
            <person name="Caldwell B."/>
            <person name="Capuano V."/>
            <person name="Carter N.M."/>
            <person name="Choi S.-K."/>
            <person name="Codani J.-J."/>
            <person name="Connerton I.F."/>
            <person name="Cummings N.J."/>
            <person name="Daniel R.A."/>
            <person name="Denizot F."/>
            <person name="Devine K.M."/>
            <person name="Duesterhoeft A."/>
            <person name="Ehrlich S.D."/>
            <person name="Emmerson P.T."/>
            <person name="Entian K.-D."/>
            <person name="Errington J."/>
            <person name="Fabret C."/>
            <person name="Ferrari E."/>
            <person name="Foulger D."/>
            <person name="Fritz C."/>
            <person name="Fujita M."/>
            <person name="Fujita Y."/>
            <person name="Fuma S."/>
            <person name="Galizzi A."/>
            <person name="Galleron N."/>
            <person name="Ghim S.-Y."/>
            <person name="Glaser P."/>
            <person name="Goffeau A."/>
            <person name="Golightly E.J."/>
            <person name="Grandi G."/>
            <person name="Guiseppi G."/>
            <person name="Guy B.J."/>
            <person name="Haga K."/>
            <person name="Haiech J."/>
            <person name="Harwood C.R."/>
            <person name="Henaut A."/>
            <person name="Hilbert H."/>
            <person name="Holsappel S."/>
            <person name="Hosono S."/>
            <person name="Hullo M.-F."/>
            <person name="Itaya M."/>
            <person name="Jones L.-M."/>
            <person name="Joris B."/>
            <person name="Karamata D."/>
            <person name="Kasahara Y."/>
            <person name="Klaerr-Blanchard M."/>
            <person name="Klein C."/>
            <person name="Kobayashi Y."/>
            <person name="Koetter P."/>
            <person name="Koningstein G."/>
            <person name="Krogh S."/>
            <person name="Kumano M."/>
            <person name="Kurita K."/>
            <person name="Lapidus A."/>
            <person name="Lardinois S."/>
            <person name="Lauber J."/>
            <person name="Lazarevic V."/>
            <person name="Lee S.-M."/>
            <person name="Levine A."/>
            <person name="Liu H."/>
            <person name="Masuda S."/>
            <person name="Mauel C."/>
            <person name="Medigue C."/>
            <person name="Medina N."/>
            <person name="Mellado R.P."/>
            <person name="Mizuno M."/>
            <person name="Moestl D."/>
            <person name="Nakai S."/>
            <person name="Noback M."/>
            <person name="Noone D."/>
            <person name="O'Reilly M."/>
            <person name="Ogawa K."/>
            <person name="Ogiwara A."/>
            <person name="Oudega B."/>
            <person name="Park S.-H."/>
            <person name="Parro V."/>
            <person name="Pohl T.M."/>
            <person name="Portetelle D."/>
            <person name="Porwollik S."/>
            <person name="Prescott A.M."/>
            <person name="Presecan E."/>
            <person name="Pujic P."/>
            <person name="Purnelle B."/>
            <person name="Rapoport G."/>
            <person name="Rey M."/>
            <person name="Reynolds S."/>
            <person name="Rieger M."/>
            <person name="Rivolta C."/>
            <person name="Rocha E."/>
            <person name="Roche B."/>
            <person name="Rose M."/>
            <person name="Sadaie Y."/>
            <person name="Sato T."/>
            <person name="Scanlan E."/>
            <person name="Schleich S."/>
            <person name="Schroeter R."/>
            <person name="Scoffone F."/>
            <person name="Sekiguchi J."/>
            <person name="Sekowska A."/>
            <person name="Seror S.J."/>
            <person name="Serror P."/>
            <person name="Shin B.-S."/>
            <person name="Soldo B."/>
            <person name="Sorokin A."/>
            <person name="Tacconi E."/>
            <person name="Takagi T."/>
            <person name="Takahashi H."/>
            <person name="Takemaru K."/>
            <person name="Takeuchi M."/>
            <person name="Tamakoshi A."/>
            <person name="Tanaka T."/>
            <person name="Terpstra P."/>
            <person name="Tognoni A."/>
            <person name="Tosato V."/>
            <person name="Uchiyama S."/>
            <person name="Vandenbol M."/>
            <person name="Vannier F."/>
            <person name="Vassarotti A."/>
            <person name="Viari A."/>
            <person name="Wambutt R."/>
            <person name="Wedler E."/>
            <person name="Wedler H."/>
            <person name="Weitzenegger T."/>
            <person name="Winters P."/>
            <person name="Wipat A."/>
            <person name="Yamamoto H."/>
            <person name="Yamane K."/>
            <person name="Yasumoto K."/>
            <person name="Yata K."/>
            <person name="Yoshida K."/>
            <person name="Yoshikawa H.-F."/>
            <person name="Zumstein E."/>
            <person name="Yoshikawa H."/>
            <person name="Danchin A."/>
        </authorList>
    </citation>
    <scope>NUCLEOTIDE SEQUENCE [LARGE SCALE GENOMIC DNA]</scope>
    <source>
        <strain>168</strain>
    </source>
</reference>
<comment type="function">
    <text>Transcriptional repressor for the ribose rbsDACBK operon.</text>
</comment>
<proteinExistence type="predicted"/>
<sequence>MATIKDVAGAAGVSVATVSRNLNDNGYVHEETRTRVIAAMAKLNYYPNEVARSLYKRESRLIGLLLPDITNPFFPQLARGAEDELNREGYRLIFGNSDEELKKELEYLQTFKQNHVAGIIAATNYPDLEEYSGMNYPVVFLDRTLEGAPSVSSDGYTGVKLAAQAIIHGKSQRITLLRGPAHLPTAQDRFNGALEILKQAEVDFQVIETASFSIKDAQSMAKELFASYPATDGVIASNDIQAAAVLHEALRRGKNVPEDIQIIGYDDIPQSGLLFPPLSTIKQPAYDMGKEAAKLLLGIIKKQPLAETAIQMPVTYIGRKTTRKED</sequence>
<dbReference type="EMBL" id="Z25798">
    <property type="protein sequence ID" value="CAA81048.1"/>
    <property type="molecule type" value="Genomic_DNA"/>
</dbReference>
<dbReference type="EMBL" id="Z92953">
    <property type="protein sequence ID" value="CAB07467.1"/>
    <property type="molecule type" value="Genomic_DNA"/>
</dbReference>
<dbReference type="EMBL" id="AL009126">
    <property type="protein sequence ID" value="CAB15608.1"/>
    <property type="molecule type" value="Genomic_DNA"/>
</dbReference>
<dbReference type="PIR" id="E69690">
    <property type="entry name" value="E69690"/>
</dbReference>
<dbReference type="RefSeq" id="NP_391472.1">
    <property type="nucleotide sequence ID" value="NC_000964.3"/>
</dbReference>
<dbReference type="RefSeq" id="WP_009968279.1">
    <property type="nucleotide sequence ID" value="NZ_OZ025638.1"/>
</dbReference>
<dbReference type="SMR" id="P36944"/>
<dbReference type="FunCoup" id="P36944">
    <property type="interactions" value="75"/>
</dbReference>
<dbReference type="STRING" id="224308.BSU35910"/>
<dbReference type="PaxDb" id="224308-BSU35910"/>
<dbReference type="EnsemblBacteria" id="CAB15608">
    <property type="protein sequence ID" value="CAB15608"/>
    <property type="gene ID" value="BSU_35910"/>
</dbReference>
<dbReference type="GeneID" id="936836"/>
<dbReference type="KEGG" id="bsu:BSU35910"/>
<dbReference type="PATRIC" id="fig|224308.179.peg.3888"/>
<dbReference type="eggNOG" id="COG1609">
    <property type="taxonomic scope" value="Bacteria"/>
</dbReference>
<dbReference type="InParanoid" id="P36944"/>
<dbReference type="OrthoDB" id="9796186at2"/>
<dbReference type="PhylomeDB" id="P36944"/>
<dbReference type="BioCyc" id="BSUB:BSU35910-MONOMER"/>
<dbReference type="Proteomes" id="UP000001570">
    <property type="component" value="Chromosome"/>
</dbReference>
<dbReference type="GO" id="GO:0003700">
    <property type="term" value="F:DNA-binding transcription factor activity"/>
    <property type="evidence" value="ECO:0000318"/>
    <property type="project" value="GO_Central"/>
</dbReference>
<dbReference type="GO" id="GO:0000976">
    <property type="term" value="F:transcription cis-regulatory region binding"/>
    <property type="evidence" value="ECO:0000318"/>
    <property type="project" value="GO_Central"/>
</dbReference>
<dbReference type="GO" id="GO:0006355">
    <property type="term" value="P:regulation of DNA-templated transcription"/>
    <property type="evidence" value="ECO:0000318"/>
    <property type="project" value="GO_Central"/>
</dbReference>
<dbReference type="CDD" id="cd01392">
    <property type="entry name" value="HTH_LacI"/>
    <property type="match status" value="1"/>
</dbReference>
<dbReference type="CDD" id="cd06291">
    <property type="entry name" value="PBP1_Qymf-like"/>
    <property type="match status" value="1"/>
</dbReference>
<dbReference type="Gene3D" id="3.40.50.2300">
    <property type="match status" value="2"/>
</dbReference>
<dbReference type="Gene3D" id="1.10.260.40">
    <property type="entry name" value="lambda repressor-like DNA-binding domains"/>
    <property type="match status" value="1"/>
</dbReference>
<dbReference type="InterPro" id="IPR000843">
    <property type="entry name" value="HTH_LacI"/>
</dbReference>
<dbReference type="InterPro" id="IPR046335">
    <property type="entry name" value="LacI/GalR-like_sensor"/>
</dbReference>
<dbReference type="InterPro" id="IPR010982">
    <property type="entry name" value="Lambda_DNA-bd_dom_sf"/>
</dbReference>
<dbReference type="InterPro" id="IPR028082">
    <property type="entry name" value="Peripla_BP_I"/>
</dbReference>
<dbReference type="PANTHER" id="PTHR30146">
    <property type="entry name" value="LACI-RELATED TRANSCRIPTIONAL REPRESSOR"/>
    <property type="match status" value="1"/>
</dbReference>
<dbReference type="PANTHER" id="PTHR30146:SF95">
    <property type="entry name" value="RIBOSE OPERON REPRESSOR"/>
    <property type="match status" value="1"/>
</dbReference>
<dbReference type="Pfam" id="PF00356">
    <property type="entry name" value="LacI"/>
    <property type="match status" value="1"/>
</dbReference>
<dbReference type="Pfam" id="PF13377">
    <property type="entry name" value="Peripla_BP_3"/>
    <property type="match status" value="1"/>
</dbReference>
<dbReference type="PRINTS" id="PR00036">
    <property type="entry name" value="HTHLACI"/>
</dbReference>
<dbReference type="SMART" id="SM00354">
    <property type="entry name" value="HTH_LACI"/>
    <property type="match status" value="1"/>
</dbReference>
<dbReference type="SUPFAM" id="SSF47413">
    <property type="entry name" value="lambda repressor-like DNA-binding domains"/>
    <property type="match status" value="1"/>
</dbReference>
<dbReference type="SUPFAM" id="SSF53822">
    <property type="entry name" value="Periplasmic binding protein-like I"/>
    <property type="match status" value="1"/>
</dbReference>
<dbReference type="PROSITE" id="PS00356">
    <property type="entry name" value="HTH_LACI_1"/>
    <property type="match status" value="1"/>
</dbReference>
<dbReference type="PROSITE" id="PS50932">
    <property type="entry name" value="HTH_LACI_2"/>
    <property type="match status" value="1"/>
</dbReference>
<feature type="chain" id="PRO_0000107984" description="Ribose operon repressor">
    <location>
        <begin position="1"/>
        <end position="326"/>
    </location>
</feature>
<feature type="domain" description="HTH lacI-type" evidence="1">
    <location>
        <begin position="1"/>
        <end position="56"/>
    </location>
</feature>
<feature type="DNA-binding region" description="H-T-H motif" evidence="1">
    <location>
        <begin position="4"/>
        <end position="23"/>
    </location>
</feature>
<feature type="sequence conflict" description="In Ref. 1; CAA81048." evidence="2" ref="1">
    <original>ATNYPDLE</original>
    <variation>QRITRISR</variation>
    <location>
        <begin position="122"/>
        <end position="129"/>
    </location>
</feature>
<feature type="sequence conflict" description="In Ref. 1; CAA81048." evidence="2" ref="1">
    <original>RGKNVPE</original>
    <variation>AKKRAG</variation>
    <location>
        <begin position="252"/>
        <end position="258"/>
    </location>
</feature>